<reference key="1">
    <citation type="journal article" date="2002" name="Nature">
        <title>The genome sequence and structure of rice chromosome 1.</title>
        <authorList>
            <person name="Sasaki T."/>
            <person name="Matsumoto T."/>
            <person name="Yamamoto K."/>
            <person name="Sakata K."/>
            <person name="Baba T."/>
            <person name="Katayose Y."/>
            <person name="Wu J."/>
            <person name="Niimura Y."/>
            <person name="Cheng Z."/>
            <person name="Nagamura Y."/>
            <person name="Antonio B.A."/>
            <person name="Kanamori H."/>
            <person name="Hosokawa S."/>
            <person name="Masukawa M."/>
            <person name="Arikawa K."/>
            <person name="Chiden Y."/>
            <person name="Hayashi M."/>
            <person name="Okamoto M."/>
            <person name="Ando T."/>
            <person name="Aoki H."/>
            <person name="Arita K."/>
            <person name="Hamada M."/>
            <person name="Harada C."/>
            <person name="Hijishita S."/>
            <person name="Honda M."/>
            <person name="Ichikawa Y."/>
            <person name="Idonuma A."/>
            <person name="Iijima M."/>
            <person name="Ikeda M."/>
            <person name="Ikeno M."/>
            <person name="Ito S."/>
            <person name="Ito T."/>
            <person name="Ito Y."/>
            <person name="Ito Y."/>
            <person name="Iwabuchi A."/>
            <person name="Kamiya K."/>
            <person name="Karasawa W."/>
            <person name="Katagiri S."/>
            <person name="Kikuta A."/>
            <person name="Kobayashi N."/>
            <person name="Kono I."/>
            <person name="Machita K."/>
            <person name="Maehara T."/>
            <person name="Mizuno H."/>
            <person name="Mizubayashi T."/>
            <person name="Mukai Y."/>
            <person name="Nagasaki H."/>
            <person name="Nakashima M."/>
            <person name="Nakama Y."/>
            <person name="Nakamichi Y."/>
            <person name="Nakamura M."/>
            <person name="Namiki N."/>
            <person name="Negishi M."/>
            <person name="Ohta I."/>
            <person name="Ono N."/>
            <person name="Saji S."/>
            <person name="Sakai K."/>
            <person name="Shibata M."/>
            <person name="Shimokawa T."/>
            <person name="Shomura A."/>
            <person name="Song J."/>
            <person name="Takazaki Y."/>
            <person name="Terasawa K."/>
            <person name="Tsuji K."/>
            <person name="Waki K."/>
            <person name="Yamagata H."/>
            <person name="Yamane H."/>
            <person name="Yoshiki S."/>
            <person name="Yoshihara R."/>
            <person name="Yukawa K."/>
            <person name="Zhong H."/>
            <person name="Iwama H."/>
            <person name="Endo T."/>
            <person name="Ito H."/>
            <person name="Hahn J.H."/>
            <person name="Kim H.-I."/>
            <person name="Eun M.-Y."/>
            <person name="Yano M."/>
            <person name="Jiang J."/>
            <person name="Gojobori T."/>
        </authorList>
    </citation>
    <scope>NUCLEOTIDE SEQUENCE [LARGE SCALE GENOMIC DNA]</scope>
    <source>
        <strain>cv. Nipponbare</strain>
    </source>
</reference>
<reference key="2">
    <citation type="journal article" date="2005" name="Nature">
        <title>The map-based sequence of the rice genome.</title>
        <authorList>
            <consortium name="International rice genome sequencing project (IRGSP)"/>
        </authorList>
    </citation>
    <scope>NUCLEOTIDE SEQUENCE [LARGE SCALE GENOMIC DNA]</scope>
    <source>
        <strain>cv. Nipponbare</strain>
    </source>
</reference>
<reference key="3">
    <citation type="journal article" date="2008" name="Nucleic Acids Res.">
        <title>The rice annotation project database (RAP-DB): 2008 update.</title>
        <authorList>
            <consortium name="The rice annotation project (RAP)"/>
        </authorList>
    </citation>
    <scope>GENOME REANNOTATION</scope>
    <source>
        <strain>cv. Nipponbare</strain>
    </source>
</reference>
<reference key="4">
    <citation type="journal article" date="2013" name="Rice">
        <title>Improvement of the Oryza sativa Nipponbare reference genome using next generation sequence and optical map data.</title>
        <authorList>
            <person name="Kawahara Y."/>
            <person name="de la Bastide M."/>
            <person name="Hamilton J.P."/>
            <person name="Kanamori H."/>
            <person name="McCombie W.R."/>
            <person name="Ouyang S."/>
            <person name="Schwartz D.C."/>
            <person name="Tanaka T."/>
            <person name="Wu J."/>
            <person name="Zhou S."/>
            <person name="Childs K.L."/>
            <person name="Davidson R.M."/>
            <person name="Lin H."/>
            <person name="Quesada-Ocampo L."/>
            <person name="Vaillancourt B."/>
            <person name="Sakai H."/>
            <person name="Lee S.S."/>
            <person name="Kim J."/>
            <person name="Numa H."/>
            <person name="Itoh T."/>
            <person name="Buell C.R."/>
            <person name="Matsumoto T."/>
        </authorList>
    </citation>
    <scope>GENOME REANNOTATION</scope>
    <source>
        <strain>cv. Nipponbare</strain>
    </source>
</reference>
<reference key="5">
    <citation type="journal article" date="2003" name="Science">
        <title>Collection, mapping, and annotation of over 28,000 cDNA clones from japonica rice.</title>
        <authorList>
            <consortium name="The rice full-length cDNA consortium"/>
        </authorList>
    </citation>
    <scope>NUCLEOTIDE SEQUENCE [LARGE SCALE MRNA] OF 48-666 (ISOFORM 2)</scope>
    <scope>NUCLEOTIDE SEQUENCE [LARGE SCALE MRNA] OF 471-666 (ISOFORM 1)</scope>
    <source>
        <strain>cv. Nipponbare</strain>
    </source>
</reference>
<sequence length="666" mass="72189">MRTSRVASPPPSPKDHDTWAIATDLARPHTLRILTHQNQTTGLLTPPHAAFLPDPNLPRRLPFPSSSSTPTAAAPPDSGEPSRARARTETYRTGDMNPYDLRYADPSSYRDRRSDLAGAPVLAASAPAAANPYAAAYAPAPAAPVAPAGGDFSRFGGRGRGGGAGGGGWGRGGGGGGGAGGYRGGGGRGGGRDALDSLSLPKPDFRSLIPFEKNFYVECPAVQAMSDMDVSQYRRQRDITVEGHDVPKPVRYFQEANFPDYCMQAIAKSGFVEPTPIQSQGWPMALKGRDMIGIAQTGSGKTLSYLLPGLVHVGAQPRLEQGDGPIVLILAPTRELAVQIQQESGKFGSYSRTRSTCIYGGAPKGPQIRDLRRGVEIVIATPGRLIDMLEGGHTNLRRVTYLVLDEADRMLDMGFEPQIRKIVAQIRPDRQTLYWSATWPREVESLARQFLQNPYKVIIGSPDLKANHSIQQIIEVISEHEKYPRLSKLLSDLMDGSRILIFFQTKKDCDKVTRQLRMDGWPALSIHGDKAQAERDYVLAEFKSGKSPIMAATDVAARGLDVKDIKCVINFDFPTTLEDYIHRIGRTGRAGASGTAFTFFTLSNAKFSRNLVKILREAGQVVNPALESMAKSASSMGGGNFRSRGRGGFGNRSGSNSIPIRGRRPY</sequence>
<gene>
    <name type="ordered locus">Os01g0911100</name>
    <name type="ordered locus">LOC_Os01g68320</name>
    <name type="ORF">P0456E05.41-1</name>
    <name type="ORF">P0456E05.41-2</name>
    <name type="ORF">P0470A12.9-1</name>
    <name type="ORF">P0470A12.9-2</name>
</gene>
<comment type="function">
    <text evidence="1">ATP-dependent RNA helicase involved nonsense-mediated mRNA decay and ribosome biogenesis through rRNA processing.</text>
</comment>
<comment type="catalytic activity">
    <reaction>
        <text>ATP + H2O = ADP + phosphate + H(+)</text>
        <dbReference type="Rhea" id="RHEA:13065"/>
        <dbReference type="ChEBI" id="CHEBI:15377"/>
        <dbReference type="ChEBI" id="CHEBI:15378"/>
        <dbReference type="ChEBI" id="CHEBI:30616"/>
        <dbReference type="ChEBI" id="CHEBI:43474"/>
        <dbReference type="ChEBI" id="CHEBI:456216"/>
        <dbReference type="EC" id="3.6.4.13"/>
    </reaction>
</comment>
<comment type="subcellular location">
    <subcellularLocation>
        <location evidence="1">Nucleus</location>
    </subcellularLocation>
</comment>
<comment type="alternative products">
    <event type="alternative splicing"/>
    <isoform>
        <id>Q5N7W4-1</id>
        <name>1</name>
        <sequence type="displayed"/>
    </isoform>
    <isoform>
        <id>Q5N7W4-2</id>
        <name>2</name>
        <sequence type="described" ref="VSP_024157 VSP_024158"/>
    </isoform>
</comment>
<comment type="domain">
    <text>The Q motif is unique to and characteristic of the DEAD box family of RNA helicases and controls ATP binding and hydrolysis.</text>
</comment>
<comment type="similarity">
    <text evidence="6">Belongs to the DEAD box helicase family. DDX5/DBP2 subfamily.</text>
</comment>
<comment type="sequence caution" evidence="6">
    <conflict type="erroneous initiation">
        <sequence resource="EMBL-CDS" id="BAD82339"/>
    </conflict>
</comment>
<comment type="sequence caution" evidence="6">
    <conflict type="erroneous initiation">
        <sequence resource="EMBL-CDS" id="BAD82340"/>
    </conflict>
</comment>
<comment type="sequence caution" evidence="6">
    <conflict type="erroneous initiation">
        <sequence resource="EMBL-CDS" id="BAD82427"/>
    </conflict>
</comment>
<comment type="sequence caution" evidence="6">
    <conflict type="erroneous initiation">
        <sequence resource="EMBL-CDS" id="BAD82428"/>
    </conflict>
</comment>
<comment type="sequence caution" evidence="6">
    <conflict type="erroneous initiation">
        <sequence resource="EMBL-CDS" id="BAF07072"/>
    </conflict>
</comment>
<accession>Q5N7W4</accession>
<accession>Q5N7W5</accession>
<proteinExistence type="evidence at transcript level"/>
<keyword id="KW-0025">Alternative splicing</keyword>
<keyword id="KW-0067">ATP-binding</keyword>
<keyword id="KW-0347">Helicase</keyword>
<keyword id="KW-0378">Hydrolase</keyword>
<keyword id="KW-0866">Nonsense-mediated mRNA decay</keyword>
<keyword id="KW-0547">Nucleotide-binding</keyword>
<keyword id="KW-0539">Nucleus</keyword>
<keyword id="KW-1185">Reference proteome</keyword>
<keyword id="KW-0690">Ribosome biogenesis</keyword>
<keyword id="KW-0694">RNA-binding</keyword>
<keyword id="KW-0698">rRNA processing</keyword>
<name>RH30_ORYSJ</name>
<protein>
    <recommendedName>
        <fullName>DEAD-box ATP-dependent RNA helicase 30</fullName>
        <ecNumber>3.6.4.13</ecNumber>
    </recommendedName>
</protein>
<evidence type="ECO:0000250" key="1"/>
<evidence type="ECO:0000255" key="2">
    <source>
        <dbReference type="PROSITE-ProRule" id="PRU00541"/>
    </source>
</evidence>
<evidence type="ECO:0000255" key="3">
    <source>
        <dbReference type="PROSITE-ProRule" id="PRU00542"/>
    </source>
</evidence>
<evidence type="ECO:0000256" key="4">
    <source>
        <dbReference type="SAM" id="MobiDB-lite"/>
    </source>
</evidence>
<evidence type="ECO:0000303" key="5">
    <source>
    </source>
</evidence>
<evidence type="ECO:0000305" key="6"/>
<dbReference type="EC" id="3.6.4.13"/>
<dbReference type="EMBL" id="AP003416">
    <property type="protein sequence ID" value="BAD82339.1"/>
    <property type="status" value="ALT_INIT"/>
    <property type="molecule type" value="Genomic_DNA"/>
</dbReference>
<dbReference type="EMBL" id="AP003416">
    <property type="protein sequence ID" value="BAD82340.1"/>
    <property type="status" value="ALT_INIT"/>
    <property type="molecule type" value="Genomic_DNA"/>
</dbReference>
<dbReference type="EMBL" id="AP003436">
    <property type="protein sequence ID" value="BAD82427.1"/>
    <property type="status" value="ALT_INIT"/>
    <property type="molecule type" value="Genomic_DNA"/>
</dbReference>
<dbReference type="EMBL" id="AP003436">
    <property type="protein sequence ID" value="BAD82428.1"/>
    <property type="status" value="ALT_INIT"/>
    <property type="molecule type" value="Genomic_DNA"/>
</dbReference>
<dbReference type="EMBL" id="AP008207">
    <property type="protein sequence ID" value="BAF07072.1"/>
    <property type="status" value="ALT_INIT"/>
    <property type="molecule type" value="Genomic_DNA"/>
</dbReference>
<dbReference type="EMBL" id="AP014957">
    <property type="status" value="NOT_ANNOTATED_CDS"/>
    <property type="molecule type" value="Genomic_DNA"/>
</dbReference>
<dbReference type="EMBL" id="AK062123">
    <property type="status" value="NOT_ANNOTATED_CDS"/>
    <property type="molecule type" value="mRNA"/>
</dbReference>
<dbReference type="EMBL" id="AK064782">
    <property type="status" value="NOT_ANNOTATED_CDS"/>
    <property type="molecule type" value="mRNA"/>
</dbReference>
<dbReference type="RefSeq" id="XP_015648572.1">
    <property type="nucleotide sequence ID" value="XM_015793086.1"/>
</dbReference>
<dbReference type="SMR" id="Q5N7W4"/>
<dbReference type="FunCoup" id="Q5N7W4">
    <property type="interactions" value="2353"/>
</dbReference>
<dbReference type="STRING" id="39947.Q5N7W4"/>
<dbReference type="PaxDb" id="39947-Q5N7W4"/>
<dbReference type="eggNOG" id="KOG0331">
    <property type="taxonomic scope" value="Eukaryota"/>
</dbReference>
<dbReference type="HOGENOM" id="CLU_003041_16_9_1"/>
<dbReference type="InParanoid" id="Q5N7W4"/>
<dbReference type="OrthoDB" id="196131at2759"/>
<dbReference type="Proteomes" id="UP000000763">
    <property type="component" value="Chromosome 1"/>
</dbReference>
<dbReference type="Proteomes" id="UP000059680">
    <property type="component" value="Chromosome 1"/>
</dbReference>
<dbReference type="GO" id="GO:0005737">
    <property type="term" value="C:cytoplasm"/>
    <property type="evidence" value="ECO:0000318"/>
    <property type="project" value="GO_Central"/>
</dbReference>
<dbReference type="GO" id="GO:0005634">
    <property type="term" value="C:nucleus"/>
    <property type="evidence" value="ECO:0000318"/>
    <property type="project" value="GO_Central"/>
</dbReference>
<dbReference type="GO" id="GO:1990904">
    <property type="term" value="C:ribonucleoprotein complex"/>
    <property type="evidence" value="ECO:0000318"/>
    <property type="project" value="GO_Central"/>
</dbReference>
<dbReference type="GO" id="GO:0005524">
    <property type="term" value="F:ATP binding"/>
    <property type="evidence" value="ECO:0007669"/>
    <property type="project" value="UniProtKB-KW"/>
</dbReference>
<dbReference type="GO" id="GO:0016887">
    <property type="term" value="F:ATP hydrolysis activity"/>
    <property type="evidence" value="ECO:0007669"/>
    <property type="project" value="RHEA"/>
</dbReference>
<dbReference type="GO" id="GO:0003729">
    <property type="term" value="F:mRNA binding"/>
    <property type="evidence" value="ECO:0000318"/>
    <property type="project" value="GO_Central"/>
</dbReference>
<dbReference type="GO" id="GO:0003724">
    <property type="term" value="F:RNA helicase activity"/>
    <property type="evidence" value="ECO:0000318"/>
    <property type="project" value="GO_Central"/>
</dbReference>
<dbReference type="GO" id="GO:0000184">
    <property type="term" value="P:nuclear-transcribed mRNA catabolic process, nonsense-mediated decay"/>
    <property type="evidence" value="ECO:0007669"/>
    <property type="project" value="UniProtKB-KW"/>
</dbReference>
<dbReference type="GO" id="GO:0006364">
    <property type="term" value="P:rRNA processing"/>
    <property type="evidence" value="ECO:0007669"/>
    <property type="project" value="UniProtKB-KW"/>
</dbReference>
<dbReference type="CDD" id="cd17966">
    <property type="entry name" value="DEADc_DDX5_DDX17"/>
    <property type="match status" value="1"/>
</dbReference>
<dbReference type="CDD" id="cd18787">
    <property type="entry name" value="SF2_C_DEAD"/>
    <property type="match status" value="1"/>
</dbReference>
<dbReference type="FunFam" id="3.40.50.300:FF:000008">
    <property type="entry name" value="ATP-dependent RNA helicase RhlB"/>
    <property type="match status" value="1"/>
</dbReference>
<dbReference type="FunFam" id="3.40.50.300:FF:000079">
    <property type="entry name" value="probable ATP-dependent RNA helicase DDX17"/>
    <property type="match status" value="1"/>
</dbReference>
<dbReference type="Gene3D" id="3.40.50.300">
    <property type="entry name" value="P-loop containing nucleotide triphosphate hydrolases"/>
    <property type="match status" value="2"/>
</dbReference>
<dbReference type="InterPro" id="IPR011545">
    <property type="entry name" value="DEAD/DEAH_box_helicase_dom"/>
</dbReference>
<dbReference type="InterPro" id="IPR014001">
    <property type="entry name" value="Helicase_ATP-bd"/>
</dbReference>
<dbReference type="InterPro" id="IPR001650">
    <property type="entry name" value="Helicase_C-like"/>
</dbReference>
<dbReference type="InterPro" id="IPR027417">
    <property type="entry name" value="P-loop_NTPase"/>
</dbReference>
<dbReference type="InterPro" id="IPR000629">
    <property type="entry name" value="RNA-helicase_DEAD-box_CS"/>
</dbReference>
<dbReference type="InterPro" id="IPR014014">
    <property type="entry name" value="RNA_helicase_DEAD_Q_motif"/>
</dbReference>
<dbReference type="PANTHER" id="PTHR47958">
    <property type="entry name" value="ATP-DEPENDENT RNA HELICASE DBP3"/>
    <property type="match status" value="1"/>
</dbReference>
<dbReference type="Pfam" id="PF00270">
    <property type="entry name" value="DEAD"/>
    <property type="match status" value="1"/>
</dbReference>
<dbReference type="Pfam" id="PF00271">
    <property type="entry name" value="Helicase_C"/>
    <property type="match status" value="1"/>
</dbReference>
<dbReference type="SMART" id="SM00487">
    <property type="entry name" value="DEXDc"/>
    <property type="match status" value="1"/>
</dbReference>
<dbReference type="SMART" id="SM00490">
    <property type="entry name" value="HELICc"/>
    <property type="match status" value="1"/>
</dbReference>
<dbReference type="SUPFAM" id="SSF52540">
    <property type="entry name" value="P-loop containing nucleoside triphosphate hydrolases"/>
    <property type="match status" value="1"/>
</dbReference>
<dbReference type="PROSITE" id="PS00039">
    <property type="entry name" value="DEAD_ATP_HELICASE"/>
    <property type="match status" value="1"/>
</dbReference>
<dbReference type="PROSITE" id="PS51192">
    <property type="entry name" value="HELICASE_ATP_BIND_1"/>
    <property type="match status" value="1"/>
</dbReference>
<dbReference type="PROSITE" id="PS51194">
    <property type="entry name" value="HELICASE_CTER"/>
    <property type="match status" value="1"/>
</dbReference>
<dbReference type="PROSITE" id="PS51195">
    <property type="entry name" value="Q_MOTIF"/>
    <property type="match status" value="1"/>
</dbReference>
<feature type="chain" id="PRO_0000282456" description="DEAD-box ATP-dependent RNA helicase 30">
    <location>
        <begin position="1"/>
        <end position="666"/>
    </location>
</feature>
<feature type="domain" description="Helicase ATP-binding" evidence="2">
    <location>
        <begin position="282"/>
        <end position="457"/>
    </location>
</feature>
<feature type="domain" description="Helicase C-terminal" evidence="3">
    <location>
        <begin position="485"/>
        <end position="630"/>
    </location>
</feature>
<feature type="region of interest" description="Disordered" evidence="4">
    <location>
        <begin position="53"/>
        <end position="102"/>
    </location>
</feature>
<feature type="region of interest" description="Disordered" evidence="4">
    <location>
        <begin position="632"/>
        <end position="666"/>
    </location>
</feature>
<feature type="short sequence motif" description="Q motif">
    <location>
        <begin position="251"/>
        <end position="279"/>
    </location>
</feature>
<feature type="short sequence motif" description="DEAD box">
    <location>
        <begin position="405"/>
        <end position="408"/>
    </location>
</feature>
<feature type="compositionally biased region" description="Low complexity" evidence="4">
    <location>
        <begin position="64"/>
        <end position="76"/>
    </location>
</feature>
<feature type="compositionally biased region" description="Basic and acidic residues" evidence="4">
    <location>
        <begin position="80"/>
        <end position="92"/>
    </location>
</feature>
<feature type="compositionally biased region" description="Gly residues" evidence="4">
    <location>
        <begin position="636"/>
        <end position="651"/>
    </location>
</feature>
<feature type="binding site" evidence="2">
    <location>
        <begin position="295"/>
        <end position="302"/>
    </location>
    <ligand>
        <name>ATP</name>
        <dbReference type="ChEBI" id="CHEBI:30616"/>
    </ligand>
</feature>
<feature type="splice variant" id="VSP_024157" description="In isoform 2." evidence="5">
    <original>DVKDIKCVINFD</original>
    <variation>GMVTCLKIRIRL</variation>
    <location>
        <begin position="561"/>
        <end position="572"/>
    </location>
</feature>
<feature type="splice variant" id="VSP_024158" description="In isoform 2." evidence="5">
    <location>
        <begin position="573"/>
        <end position="666"/>
    </location>
</feature>
<organism>
    <name type="scientific">Oryza sativa subsp. japonica</name>
    <name type="common">Rice</name>
    <dbReference type="NCBI Taxonomy" id="39947"/>
    <lineage>
        <taxon>Eukaryota</taxon>
        <taxon>Viridiplantae</taxon>
        <taxon>Streptophyta</taxon>
        <taxon>Embryophyta</taxon>
        <taxon>Tracheophyta</taxon>
        <taxon>Spermatophyta</taxon>
        <taxon>Magnoliopsida</taxon>
        <taxon>Liliopsida</taxon>
        <taxon>Poales</taxon>
        <taxon>Poaceae</taxon>
        <taxon>BOP clade</taxon>
        <taxon>Oryzoideae</taxon>
        <taxon>Oryzeae</taxon>
        <taxon>Oryzinae</taxon>
        <taxon>Oryza</taxon>
        <taxon>Oryza sativa</taxon>
    </lineage>
</organism>